<comment type="function">
    <text evidence="1">Nucleoside triphosphate pyrophosphatase that hydrolyzes dTTP and UTP. May have a dual role in cell division arrest and in preventing the incorporation of modified nucleotides into cellular nucleic acids.</text>
</comment>
<comment type="catalytic activity">
    <reaction evidence="1">
        <text>dTTP + H2O = dTMP + diphosphate + H(+)</text>
        <dbReference type="Rhea" id="RHEA:28534"/>
        <dbReference type="ChEBI" id="CHEBI:15377"/>
        <dbReference type="ChEBI" id="CHEBI:15378"/>
        <dbReference type="ChEBI" id="CHEBI:33019"/>
        <dbReference type="ChEBI" id="CHEBI:37568"/>
        <dbReference type="ChEBI" id="CHEBI:63528"/>
        <dbReference type="EC" id="3.6.1.9"/>
    </reaction>
</comment>
<comment type="catalytic activity">
    <reaction evidence="1">
        <text>UTP + H2O = UMP + diphosphate + H(+)</text>
        <dbReference type="Rhea" id="RHEA:29395"/>
        <dbReference type="ChEBI" id="CHEBI:15377"/>
        <dbReference type="ChEBI" id="CHEBI:15378"/>
        <dbReference type="ChEBI" id="CHEBI:33019"/>
        <dbReference type="ChEBI" id="CHEBI:46398"/>
        <dbReference type="ChEBI" id="CHEBI:57865"/>
        <dbReference type="EC" id="3.6.1.9"/>
    </reaction>
</comment>
<comment type="cofactor">
    <cofactor evidence="1">
        <name>a divalent metal cation</name>
        <dbReference type="ChEBI" id="CHEBI:60240"/>
    </cofactor>
</comment>
<comment type="subcellular location">
    <subcellularLocation>
        <location evidence="1">Cytoplasm</location>
    </subcellularLocation>
</comment>
<comment type="similarity">
    <text evidence="1">Belongs to the Maf family. YhdE subfamily.</text>
</comment>
<accession>Q6FDX8</accession>
<protein>
    <recommendedName>
        <fullName evidence="1">dTTP/UTP pyrophosphatase</fullName>
        <shortName evidence="1">dTTPase/UTPase</shortName>
        <ecNumber evidence="1">3.6.1.9</ecNumber>
    </recommendedName>
    <alternativeName>
        <fullName evidence="1">Nucleoside triphosphate pyrophosphatase</fullName>
    </alternativeName>
    <alternativeName>
        <fullName evidence="1">Nucleotide pyrophosphatase</fullName>
        <shortName evidence="1">Nucleotide PPase</shortName>
    </alternativeName>
</protein>
<reference key="1">
    <citation type="journal article" date="2004" name="Nucleic Acids Res.">
        <title>Unique features revealed by the genome sequence of Acinetobacter sp. ADP1, a versatile and naturally transformation competent bacterium.</title>
        <authorList>
            <person name="Barbe V."/>
            <person name="Vallenet D."/>
            <person name="Fonknechten N."/>
            <person name="Kreimeyer A."/>
            <person name="Oztas S."/>
            <person name="Labarre L."/>
            <person name="Cruveiller S."/>
            <person name="Robert C."/>
            <person name="Duprat S."/>
            <person name="Wincker P."/>
            <person name="Ornston L.N."/>
            <person name="Weissenbach J."/>
            <person name="Marliere P."/>
            <person name="Cohen G.N."/>
            <person name="Medigue C."/>
        </authorList>
    </citation>
    <scope>NUCLEOTIDE SEQUENCE [LARGE SCALE GENOMIC DNA]</scope>
    <source>
        <strain>ATCC 33305 / BD413 / ADP1</strain>
    </source>
</reference>
<name>NTPPA_ACIAD</name>
<organism>
    <name type="scientific">Acinetobacter baylyi (strain ATCC 33305 / BD413 / ADP1)</name>
    <dbReference type="NCBI Taxonomy" id="62977"/>
    <lineage>
        <taxon>Bacteria</taxon>
        <taxon>Pseudomonadati</taxon>
        <taxon>Pseudomonadota</taxon>
        <taxon>Gammaproteobacteria</taxon>
        <taxon>Moraxellales</taxon>
        <taxon>Moraxellaceae</taxon>
        <taxon>Acinetobacter</taxon>
    </lineage>
</organism>
<proteinExistence type="inferred from homology"/>
<dbReference type="EC" id="3.6.1.9" evidence="1"/>
<dbReference type="EMBL" id="CR543861">
    <property type="protein sequence ID" value="CAG67730.1"/>
    <property type="molecule type" value="Genomic_DNA"/>
</dbReference>
<dbReference type="SMR" id="Q6FDX8"/>
<dbReference type="STRING" id="202950.GCA_001485005_02583"/>
<dbReference type="KEGG" id="aci:ACIAD0829"/>
<dbReference type="eggNOG" id="COG0424">
    <property type="taxonomic scope" value="Bacteria"/>
</dbReference>
<dbReference type="HOGENOM" id="CLU_040416_2_1_6"/>
<dbReference type="Proteomes" id="UP000000430">
    <property type="component" value="Chromosome"/>
</dbReference>
<dbReference type="GO" id="GO:0005737">
    <property type="term" value="C:cytoplasm"/>
    <property type="evidence" value="ECO:0007669"/>
    <property type="project" value="UniProtKB-SubCell"/>
</dbReference>
<dbReference type="GO" id="GO:0036218">
    <property type="term" value="F:dTTP diphosphatase activity"/>
    <property type="evidence" value="ECO:0007669"/>
    <property type="project" value="RHEA"/>
</dbReference>
<dbReference type="GO" id="GO:0036221">
    <property type="term" value="F:UTP diphosphatase activity"/>
    <property type="evidence" value="ECO:0007669"/>
    <property type="project" value="RHEA"/>
</dbReference>
<dbReference type="GO" id="GO:0009117">
    <property type="term" value="P:nucleotide metabolic process"/>
    <property type="evidence" value="ECO:0007669"/>
    <property type="project" value="UniProtKB-KW"/>
</dbReference>
<dbReference type="CDD" id="cd00555">
    <property type="entry name" value="Maf"/>
    <property type="match status" value="1"/>
</dbReference>
<dbReference type="Gene3D" id="3.90.950.10">
    <property type="match status" value="1"/>
</dbReference>
<dbReference type="HAMAP" id="MF_00528">
    <property type="entry name" value="Maf"/>
    <property type="match status" value="1"/>
</dbReference>
<dbReference type="InterPro" id="IPR029001">
    <property type="entry name" value="ITPase-like_fam"/>
</dbReference>
<dbReference type="InterPro" id="IPR003697">
    <property type="entry name" value="Maf-like"/>
</dbReference>
<dbReference type="NCBIfam" id="TIGR00172">
    <property type="entry name" value="maf"/>
    <property type="match status" value="1"/>
</dbReference>
<dbReference type="NCBIfam" id="NF010944">
    <property type="entry name" value="PRK14364.1"/>
    <property type="match status" value="1"/>
</dbReference>
<dbReference type="PANTHER" id="PTHR43213">
    <property type="entry name" value="BIFUNCTIONAL DTTP/UTP PYROPHOSPHATASE/METHYLTRANSFERASE PROTEIN-RELATED"/>
    <property type="match status" value="1"/>
</dbReference>
<dbReference type="PANTHER" id="PTHR43213:SF5">
    <property type="entry name" value="BIFUNCTIONAL DTTP_UTP PYROPHOSPHATASE_METHYLTRANSFERASE PROTEIN-RELATED"/>
    <property type="match status" value="1"/>
</dbReference>
<dbReference type="Pfam" id="PF02545">
    <property type="entry name" value="Maf"/>
    <property type="match status" value="1"/>
</dbReference>
<dbReference type="PIRSF" id="PIRSF006305">
    <property type="entry name" value="Maf"/>
    <property type="match status" value="1"/>
</dbReference>
<dbReference type="SUPFAM" id="SSF52972">
    <property type="entry name" value="ITPase-like"/>
    <property type="match status" value="1"/>
</dbReference>
<gene>
    <name type="ordered locus">ACIAD0829</name>
</gene>
<keyword id="KW-0963">Cytoplasm</keyword>
<keyword id="KW-0378">Hydrolase</keyword>
<keyword id="KW-0546">Nucleotide metabolism</keyword>
<feature type="chain" id="PRO_0000267236" description="dTTP/UTP pyrophosphatase">
    <location>
        <begin position="1"/>
        <end position="183"/>
    </location>
</feature>
<feature type="active site" description="Proton acceptor" evidence="1">
    <location>
        <position position="64"/>
    </location>
</feature>
<feature type="site" description="Important for substrate specificity" evidence="1">
    <location>
        <position position="7"/>
    </location>
</feature>
<feature type="site" description="Important for substrate specificity" evidence="1">
    <location>
        <position position="65"/>
    </location>
</feature>
<feature type="site" description="Important for substrate specificity" evidence="1">
    <location>
        <position position="147"/>
    </location>
</feature>
<evidence type="ECO:0000255" key="1">
    <source>
        <dbReference type="HAMAP-Rule" id="MF_00528"/>
    </source>
</evidence>
<sequence>MASSSPRRQELLKQLGLEFESYAPEIDESVQYNETVEAYVERLAREKANTILQQFPQSIIIAADTSLSIDGKIIGKPESKQHAFDIWSTLSGRRHDVFSGICVAASNAIHSCVVKTSVEFQTLSMADMELYWATGEPLGKAGAYAIQGIAAQFIPRIEGSYTNVVGLPLFETIQLLKRVKAFN</sequence>